<comment type="function">
    <text>May act as a growth factor.</text>
</comment>
<comment type="subcellular location">
    <subcellularLocation>
        <location>Secreted</location>
    </subcellularLocation>
</comment>
<comment type="tissue specificity">
    <text>Stomach mucosa.</text>
</comment>
<protein>
    <recommendedName>
        <fullName>Putative gastrointestinal growth factor xP1</fullName>
    </recommendedName>
</protein>
<dbReference type="EMBL" id="M75033">
    <property type="protein sequence ID" value="AAA50000.1"/>
    <property type="status" value="ALT_SEQ"/>
    <property type="molecule type" value="mRNA"/>
</dbReference>
<dbReference type="PIR" id="A40850">
    <property type="entry name" value="A40850"/>
</dbReference>
<dbReference type="RefSeq" id="NP_001079242.1">
    <property type="nucleotide sequence ID" value="NM_001085773.1"/>
</dbReference>
<dbReference type="SMR" id="Q00222"/>
<dbReference type="GeneID" id="378509"/>
<dbReference type="KEGG" id="xla:378509"/>
<dbReference type="AGR" id="Xenbase:XB-GENE-6252667"/>
<dbReference type="CTD" id="378509"/>
<dbReference type="Xenbase" id="XB-GENE-6252667">
    <property type="gene designation" value="tff3.S"/>
</dbReference>
<dbReference type="OrthoDB" id="10051464at2759"/>
<dbReference type="Proteomes" id="UP000186698">
    <property type="component" value="Chromosome 2S"/>
</dbReference>
<dbReference type="Bgee" id="378509">
    <property type="expression patterns" value="Expressed in stomach and 9 other cell types or tissues"/>
</dbReference>
<dbReference type="GO" id="GO:0005615">
    <property type="term" value="C:extracellular space"/>
    <property type="evidence" value="ECO:0007669"/>
    <property type="project" value="TreeGrafter"/>
</dbReference>
<dbReference type="GO" id="GO:0008083">
    <property type="term" value="F:growth factor activity"/>
    <property type="evidence" value="ECO:0007669"/>
    <property type="project" value="UniProtKB-KW"/>
</dbReference>
<dbReference type="GO" id="GO:0030277">
    <property type="term" value="P:maintenance of gastrointestinal epithelium"/>
    <property type="evidence" value="ECO:0007669"/>
    <property type="project" value="TreeGrafter"/>
</dbReference>
<dbReference type="CDD" id="cd00111">
    <property type="entry name" value="Trefoil"/>
    <property type="match status" value="1"/>
</dbReference>
<dbReference type="FunFam" id="4.10.110.10:FF:000006">
    <property type="entry name" value="Trefoil factor 1"/>
    <property type="match status" value="1"/>
</dbReference>
<dbReference type="Gene3D" id="4.10.110.10">
    <property type="entry name" value="Spasmolytic Protein, domain 1"/>
    <property type="match status" value="1"/>
</dbReference>
<dbReference type="InterPro" id="IPR017994">
    <property type="entry name" value="P_trefoil_chordata"/>
</dbReference>
<dbReference type="InterPro" id="IPR017957">
    <property type="entry name" value="P_trefoil_CS"/>
</dbReference>
<dbReference type="InterPro" id="IPR000519">
    <property type="entry name" value="P_trefoil_dom"/>
</dbReference>
<dbReference type="InterPro" id="IPR044913">
    <property type="entry name" value="P_trefoil_dom_sf"/>
</dbReference>
<dbReference type="PANTHER" id="PTHR13826:SF22">
    <property type="entry name" value="GASTROINTESTINAL GROWTH FACTOR XP4-RELATED"/>
    <property type="match status" value="1"/>
</dbReference>
<dbReference type="PANTHER" id="PTHR13826">
    <property type="entry name" value="INTESTINAL TREFOIL FACTOR-RELATED"/>
    <property type="match status" value="1"/>
</dbReference>
<dbReference type="Pfam" id="PF00088">
    <property type="entry name" value="Trefoil"/>
    <property type="match status" value="1"/>
</dbReference>
<dbReference type="PRINTS" id="PR00680">
    <property type="entry name" value="PTREFOIL"/>
</dbReference>
<dbReference type="SMART" id="SM00018">
    <property type="entry name" value="PD"/>
    <property type="match status" value="1"/>
</dbReference>
<dbReference type="SUPFAM" id="SSF57492">
    <property type="entry name" value="Trefoil"/>
    <property type="match status" value="1"/>
</dbReference>
<dbReference type="PROSITE" id="PS00025">
    <property type="entry name" value="P_TREFOIL_1"/>
    <property type="match status" value="1"/>
</dbReference>
<dbReference type="PROSITE" id="PS51448">
    <property type="entry name" value="P_TREFOIL_2"/>
    <property type="match status" value="1"/>
</dbReference>
<accession>Q00222</accession>
<keyword id="KW-1015">Disulfide bond</keyword>
<keyword id="KW-0339">Growth factor</keyword>
<keyword id="KW-1185">Reference proteome</keyword>
<keyword id="KW-0964">Secreted</keyword>
<keyword id="KW-0732">Signal</keyword>
<feature type="signal peptide" evidence="1">
    <location>
        <begin position="1"/>
        <end position="23"/>
    </location>
</feature>
<feature type="chain" id="PRO_0000023469" description="Putative gastrointestinal growth factor xP1">
    <location>
        <begin position="24"/>
        <end position="78"/>
    </location>
</feature>
<feature type="domain" description="P-type" evidence="2">
    <location>
        <begin position="30"/>
        <end position="73"/>
    </location>
</feature>
<feature type="disulfide bond" evidence="2">
    <location>
        <begin position="32"/>
        <end position="58"/>
    </location>
</feature>
<feature type="disulfide bond" evidence="2">
    <location>
        <begin position="42"/>
        <end position="57"/>
    </location>
</feature>
<feature type="disulfide bond" evidence="2">
    <location>
        <begin position="52"/>
        <end position="69"/>
    </location>
</feature>
<evidence type="ECO:0000255" key="1"/>
<evidence type="ECO:0000255" key="2">
    <source>
        <dbReference type="PROSITE-ProRule" id="PRU00779"/>
    </source>
</evidence>
<proteinExistence type="evidence at transcript level"/>
<gene>
    <name type="primary">p1</name>
</gene>
<name>XP1_XENLA</name>
<organism>
    <name type="scientific">Xenopus laevis</name>
    <name type="common">African clawed frog</name>
    <dbReference type="NCBI Taxonomy" id="8355"/>
    <lineage>
        <taxon>Eukaryota</taxon>
        <taxon>Metazoa</taxon>
        <taxon>Chordata</taxon>
        <taxon>Craniata</taxon>
        <taxon>Vertebrata</taxon>
        <taxon>Euteleostomi</taxon>
        <taxon>Amphibia</taxon>
        <taxon>Batrachia</taxon>
        <taxon>Anura</taxon>
        <taxon>Pipoidea</taxon>
        <taxon>Pipidae</taxon>
        <taxon>Xenopodinae</taxon>
        <taxon>Xenopus</taxon>
        <taxon>Xenopus</taxon>
    </lineage>
</organism>
<reference key="1">
    <citation type="journal article" date="1991" name="J. Biol. Chem.">
        <title>xP1 and xP4. P-domain peptides expressed in Xenopus laevis stomach mucosa.</title>
        <authorList>
            <person name="Hauser F."/>
            <person name="Hoffmann W."/>
        </authorList>
    </citation>
    <scope>NUCLEOTIDE SEQUENCE [MRNA]</scope>
    <source>
        <tissue>Stomach</tissue>
    </source>
</reference>
<sequence>MNYKVFCLVAIALIVGSIGSANGQAAFTEEQCSVERLARVNCGYSGITPQECTKQGCCFDSTIQDAPWCFYPRATPEY</sequence>